<comment type="function">
    <text evidence="1">One of the primary rRNA binding proteins, it binds directly to 16S rRNA where it nucleates assembly of the head domain of the 30S subunit.</text>
</comment>
<comment type="subunit">
    <text evidence="1">Part of the 30S ribosomal subunit.</text>
</comment>
<comment type="subcellular location">
    <subcellularLocation>
        <location>Plastid</location>
        <location>Chloroplast</location>
    </subcellularLocation>
</comment>
<comment type="similarity">
    <text evidence="3">Belongs to the universal ribosomal protein uS7 family.</text>
</comment>
<geneLocation type="chloroplast"/>
<accession>A1E9N5</accession>
<evidence type="ECO:0000250" key="1"/>
<evidence type="ECO:0000255" key="2">
    <source>
        <dbReference type="HAMAP-Rule" id="MF_00480"/>
    </source>
</evidence>
<evidence type="ECO:0000305" key="3"/>
<feature type="chain" id="PRO_0000344341" description="Small ribosomal subunit protein uS7cz/uS7cy">
    <location>
        <begin position="1"/>
        <end position="156"/>
    </location>
</feature>
<protein>
    <recommendedName>
        <fullName evidence="2">Small ribosomal subunit protein uS7cz/uS7cy</fullName>
    </recommendedName>
    <alternativeName>
        <fullName>30S ribosomal protein S7, chloroplastic</fullName>
    </alternativeName>
</protein>
<name>RR7_HORVU</name>
<keyword id="KW-0150">Chloroplast</keyword>
<keyword id="KW-0934">Plastid</keyword>
<keyword id="KW-0687">Ribonucleoprotein</keyword>
<keyword id="KW-0689">Ribosomal protein</keyword>
<keyword id="KW-0694">RNA-binding</keyword>
<keyword id="KW-0699">rRNA-binding</keyword>
<reference key="1">
    <citation type="journal article" date="2007" name="Theor. Appl. Genet.">
        <title>Complete chloroplast genome sequences of Hordeum vulgare, Sorghum bicolor and Agrostis stolonifera, and comparative analyses with other grass genomes.</title>
        <authorList>
            <person name="Saski C."/>
            <person name="Lee S.-B."/>
            <person name="Fjellheim S."/>
            <person name="Guda C."/>
            <person name="Jansen R.K."/>
            <person name="Luo H."/>
            <person name="Tomkins J."/>
            <person name="Rognli O.A."/>
            <person name="Daniell H."/>
            <person name="Clarke J.L."/>
        </authorList>
    </citation>
    <scope>NUCLEOTIDE SEQUENCE [LARGE SCALE GENOMIC DNA]</scope>
    <source>
        <strain>cv. Morex</strain>
    </source>
</reference>
<sequence length="156" mass="17659">MSRRGTAEKRTAKSDPIFRNRLVNMVVNRIMKDGKKSLAYQILYRAVKKIQQKTETNPLLVLRQAIRRVTPNIGVKTRRNKKGSTRKVPIEIGSKQGRALAIRWLLEASQKRPGRNMAFKLSSELVDAAKGSGGAIRKKEATHRMAEANRALAHFR</sequence>
<dbReference type="EMBL" id="EF115541">
    <property type="protein sequence ID" value="ABK79456.1"/>
    <property type="molecule type" value="Genomic_DNA"/>
</dbReference>
<dbReference type="EMBL" id="EF115541">
    <property type="protein sequence ID" value="ABK79471.1"/>
    <property type="molecule type" value="Genomic_DNA"/>
</dbReference>
<dbReference type="SMR" id="A1E9N5"/>
<dbReference type="OMA" id="HRAFAHF"/>
<dbReference type="GO" id="GO:0009507">
    <property type="term" value="C:chloroplast"/>
    <property type="evidence" value="ECO:0007669"/>
    <property type="project" value="UniProtKB-SubCell"/>
</dbReference>
<dbReference type="GO" id="GO:0015935">
    <property type="term" value="C:small ribosomal subunit"/>
    <property type="evidence" value="ECO:0007669"/>
    <property type="project" value="InterPro"/>
</dbReference>
<dbReference type="GO" id="GO:0019843">
    <property type="term" value="F:rRNA binding"/>
    <property type="evidence" value="ECO:0007669"/>
    <property type="project" value="UniProtKB-UniRule"/>
</dbReference>
<dbReference type="GO" id="GO:0003735">
    <property type="term" value="F:structural constituent of ribosome"/>
    <property type="evidence" value="ECO:0007669"/>
    <property type="project" value="InterPro"/>
</dbReference>
<dbReference type="GO" id="GO:0006412">
    <property type="term" value="P:translation"/>
    <property type="evidence" value="ECO:0007669"/>
    <property type="project" value="UniProtKB-UniRule"/>
</dbReference>
<dbReference type="CDD" id="cd14871">
    <property type="entry name" value="uS7_Chloroplast"/>
    <property type="match status" value="1"/>
</dbReference>
<dbReference type="FunFam" id="1.10.455.10:FF:000001">
    <property type="entry name" value="30S ribosomal protein S7"/>
    <property type="match status" value="1"/>
</dbReference>
<dbReference type="Gene3D" id="1.10.455.10">
    <property type="entry name" value="Ribosomal protein S7 domain"/>
    <property type="match status" value="1"/>
</dbReference>
<dbReference type="HAMAP" id="MF_00480_B">
    <property type="entry name" value="Ribosomal_uS7_B"/>
    <property type="match status" value="1"/>
</dbReference>
<dbReference type="InterPro" id="IPR000235">
    <property type="entry name" value="Ribosomal_uS7"/>
</dbReference>
<dbReference type="InterPro" id="IPR005717">
    <property type="entry name" value="Ribosomal_uS7_bac/org-type"/>
</dbReference>
<dbReference type="InterPro" id="IPR020606">
    <property type="entry name" value="Ribosomal_uS7_CS"/>
</dbReference>
<dbReference type="InterPro" id="IPR023798">
    <property type="entry name" value="Ribosomal_uS7_dom"/>
</dbReference>
<dbReference type="InterPro" id="IPR036823">
    <property type="entry name" value="Ribosomal_uS7_dom_sf"/>
</dbReference>
<dbReference type="NCBIfam" id="TIGR01029">
    <property type="entry name" value="rpsG_bact"/>
    <property type="match status" value="1"/>
</dbReference>
<dbReference type="PANTHER" id="PTHR11205">
    <property type="entry name" value="RIBOSOMAL PROTEIN S7"/>
    <property type="match status" value="1"/>
</dbReference>
<dbReference type="Pfam" id="PF00177">
    <property type="entry name" value="Ribosomal_S7"/>
    <property type="match status" value="1"/>
</dbReference>
<dbReference type="PIRSF" id="PIRSF002122">
    <property type="entry name" value="RPS7p_RPS7a_RPS5e_RPS7o"/>
    <property type="match status" value="1"/>
</dbReference>
<dbReference type="SUPFAM" id="SSF47973">
    <property type="entry name" value="Ribosomal protein S7"/>
    <property type="match status" value="1"/>
</dbReference>
<dbReference type="PROSITE" id="PS00052">
    <property type="entry name" value="RIBOSOMAL_S7"/>
    <property type="match status" value="1"/>
</dbReference>
<gene>
    <name type="primary">rps7-A</name>
</gene>
<gene>
    <name type="primary">rps7-B</name>
</gene>
<proteinExistence type="inferred from homology"/>
<organism>
    <name type="scientific">Hordeum vulgare</name>
    <name type="common">Barley</name>
    <dbReference type="NCBI Taxonomy" id="4513"/>
    <lineage>
        <taxon>Eukaryota</taxon>
        <taxon>Viridiplantae</taxon>
        <taxon>Streptophyta</taxon>
        <taxon>Embryophyta</taxon>
        <taxon>Tracheophyta</taxon>
        <taxon>Spermatophyta</taxon>
        <taxon>Magnoliopsida</taxon>
        <taxon>Liliopsida</taxon>
        <taxon>Poales</taxon>
        <taxon>Poaceae</taxon>
        <taxon>BOP clade</taxon>
        <taxon>Pooideae</taxon>
        <taxon>Triticodae</taxon>
        <taxon>Triticeae</taxon>
        <taxon>Hordeinae</taxon>
        <taxon>Hordeum</taxon>
    </lineage>
</organism>